<dbReference type="EC" id="4.3.3.6" evidence="1"/>
<dbReference type="EC" id="3.5.1.2" evidence="1"/>
<dbReference type="EMBL" id="AP009044">
    <property type="protein sequence ID" value="BAF53871.1"/>
    <property type="molecule type" value="Genomic_DNA"/>
</dbReference>
<dbReference type="RefSeq" id="WP_011896913.1">
    <property type="nucleotide sequence ID" value="NC_009342.1"/>
</dbReference>
<dbReference type="SMR" id="A4QCC4"/>
<dbReference type="MEROPS" id="C26.A32"/>
<dbReference type="KEGG" id="cgt:cgR_0898"/>
<dbReference type="HOGENOM" id="CLU_069674_2_0_11"/>
<dbReference type="PhylomeDB" id="A4QCC4"/>
<dbReference type="UniPathway" id="UPA00245"/>
<dbReference type="Proteomes" id="UP000006698">
    <property type="component" value="Chromosome"/>
</dbReference>
<dbReference type="GO" id="GO:0005829">
    <property type="term" value="C:cytosol"/>
    <property type="evidence" value="ECO:0007669"/>
    <property type="project" value="TreeGrafter"/>
</dbReference>
<dbReference type="GO" id="GO:1903600">
    <property type="term" value="C:glutaminase complex"/>
    <property type="evidence" value="ECO:0007669"/>
    <property type="project" value="TreeGrafter"/>
</dbReference>
<dbReference type="GO" id="GO:0004359">
    <property type="term" value="F:glutaminase activity"/>
    <property type="evidence" value="ECO:0007669"/>
    <property type="project" value="UniProtKB-UniRule"/>
</dbReference>
<dbReference type="GO" id="GO:0036381">
    <property type="term" value="F:pyridoxal 5'-phosphate synthase (glutamine hydrolysing) activity"/>
    <property type="evidence" value="ECO:0007669"/>
    <property type="project" value="UniProtKB-UniRule"/>
</dbReference>
<dbReference type="GO" id="GO:0006543">
    <property type="term" value="P:glutamine catabolic process"/>
    <property type="evidence" value="ECO:0007669"/>
    <property type="project" value="UniProtKB-UniRule"/>
</dbReference>
<dbReference type="GO" id="GO:0042823">
    <property type="term" value="P:pyridoxal phosphate biosynthetic process"/>
    <property type="evidence" value="ECO:0007669"/>
    <property type="project" value="UniProtKB-UniRule"/>
</dbReference>
<dbReference type="GO" id="GO:0008614">
    <property type="term" value="P:pyridoxine metabolic process"/>
    <property type="evidence" value="ECO:0007669"/>
    <property type="project" value="TreeGrafter"/>
</dbReference>
<dbReference type="CDD" id="cd01749">
    <property type="entry name" value="GATase1_PB"/>
    <property type="match status" value="1"/>
</dbReference>
<dbReference type="FunFam" id="3.40.50.880:FF:000010">
    <property type="entry name" value="uncharacterized protein LOC100176842 isoform X2"/>
    <property type="match status" value="1"/>
</dbReference>
<dbReference type="Gene3D" id="3.40.50.880">
    <property type="match status" value="1"/>
</dbReference>
<dbReference type="HAMAP" id="MF_01615">
    <property type="entry name" value="PdxT"/>
    <property type="match status" value="1"/>
</dbReference>
<dbReference type="InterPro" id="IPR029062">
    <property type="entry name" value="Class_I_gatase-like"/>
</dbReference>
<dbReference type="InterPro" id="IPR002161">
    <property type="entry name" value="PdxT/SNO"/>
</dbReference>
<dbReference type="InterPro" id="IPR021196">
    <property type="entry name" value="PdxT/SNO_CS"/>
</dbReference>
<dbReference type="NCBIfam" id="TIGR03800">
    <property type="entry name" value="PLP_synth_Pdx2"/>
    <property type="match status" value="1"/>
</dbReference>
<dbReference type="PANTHER" id="PTHR31559">
    <property type="entry name" value="PYRIDOXAL 5'-PHOSPHATE SYNTHASE SUBUNIT SNO"/>
    <property type="match status" value="1"/>
</dbReference>
<dbReference type="PANTHER" id="PTHR31559:SF0">
    <property type="entry name" value="PYRIDOXAL 5'-PHOSPHATE SYNTHASE SUBUNIT SNO1-RELATED"/>
    <property type="match status" value="1"/>
</dbReference>
<dbReference type="Pfam" id="PF01174">
    <property type="entry name" value="SNO"/>
    <property type="match status" value="1"/>
</dbReference>
<dbReference type="PIRSF" id="PIRSF005639">
    <property type="entry name" value="Glut_amidoT_SNO"/>
    <property type="match status" value="1"/>
</dbReference>
<dbReference type="SUPFAM" id="SSF52317">
    <property type="entry name" value="Class I glutamine amidotransferase-like"/>
    <property type="match status" value="1"/>
</dbReference>
<dbReference type="PROSITE" id="PS01236">
    <property type="entry name" value="PDXT_SNO_1"/>
    <property type="match status" value="1"/>
</dbReference>
<dbReference type="PROSITE" id="PS51130">
    <property type="entry name" value="PDXT_SNO_2"/>
    <property type="match status" value="1"/>
</dbReference>
<evidence type="ECO:0000255" key="1">
    <source>
        <dbReference type="HAMAP-Rule" id="MF_01615"/>
    </source>
</evidence>
<feature type="chain" id="PRO_0000292995" description="Pyridoxal 5'-phosphate synthase subunit PdxT">
    <location>
        <begin position="1"/>
        <end position="200"/>
    </location>
</feature>
<feature type="active site" description="Nucleophile" evidence="1">
    <location>
        <position position="78"/>
    </location>
</feature>
<feature type="active site" description="Charge relay system" evidence="1">
    <location>
        <position position="175"/>
    </location>
</feature>
<feature type="active site" description="Charge relay system" evidence="1">
    <location>
        <position position="177"/>
    </location>
</feature>
<feature type="binding site" evidence="1">
    <location>
        <begin position="46"/>
        <end position="48"/>
    </location>
    <ligand>
        <name>L-glutamine</name>
        <dbReference type="ChEBI" id="CHEBI:58359"/>
    </ligand>
</feature>
<feature type="binding site" evidence="1">
    <location>
        <position position="107"/>
    </location>
    <ligand>
        <name>L-glutamine</name>
        <dbReference type="ChEBI" id="CHEBI:58359"/>
    </ligand>
</feature>
<feature type="binding site" evidence="1">
    <location>
        <begin position="138"/>
        <end position="139"/>
    </location>
    <ligand>
        <name>L-glutamine</name>
        <dbReference type="ChEBI" id="CHEBI:58359"/>
    </ligand>
</feature>
<proteinExistence type="inferred from homology"/>
<reference key="1">
    <citation type="journal article" date="2007" name="Microbiology">
        <title>Comparative analysis of the Corynebacterium glutamicum group and complete genome sequence of strain R.</title>
        <authorList>
            <person name="Yukawa H."/>
            <person name="Omumasaba C.A."/>
            <person name="Nonaka H."/>
            <person name="Kos P."/>
            <person name="Okai N."/>
            <person name="Suzuki N."/>
            <person name="Suda M."/>
            <person name="Tsuge Y."/>
            <person name="Watanabe J."/>
            <person name="Ikeda Y."/>
            <person name="Vertes A.A."/>
            <person name="Inui M."/>
        </authorList>
    </citation>
    <scope>NUCLEOTIDE SEQUENCE [LARGE SCALE GENOMIC DNA]</scope>
    <source>
        <strain>R</strain>
    </source>
</reference>
<organism>
    <name type="scientific">Corynebacterium glutamicum (strain R)</name>
    <dbReference type="NCBI Taxonomy" id="340322"/>
    <lineage>
        <taxon>Bacteria</taxon>
        <taxon>Bacillati</taxon>
        <taxon>Actinomycetota</taxon>
        <taxon>Actinomycetes</taxon>
        <taxon>Mycobacteriales</taxon>
        <taxon>Corynebacteriaceae</taxon>
        <taxon>Corynebacterium</taxon>
    </lineage>
</organism>
<comment type="function">
    <text evidence="1">Catalyzes the hydrolysis of glutamine to glutamate and ammonia as part of the biosynthesis of pyridoxal 5'-phosphate. The resulting ammonia molecule is channeled to the active site of PdxS.</text>
</comment>
<comment type="catalytic activity">
    <reaction evidence="1">
        <text>aldehydo-D-ribose 5-phosphate + D-glyceraldehyde 3-phosphate + L-glutamine = pyridoxal 5'-phosphate + L-glutamate + phosphate + 3 H2O + H(+)</text>
        <dbReference type="Rhea" id="RHEA:31507"/>
        <dbReference type="ChEBI" id="CHEBI:15377"/>
        <dbReference type="ChEBI" id="CHEBI:15378"/>
        <dbReference type="ChEBI" id="CHEBI:29985"/>
        <dbReference type="ChEBI" id="CHEBI:43474"/>
        <dbReference type="ChEBI" id="CHEBI:58273"/>
        <dbReference type="ChEBI" id="CHEBI:58359"/>
        <dbReference type="ChEBI" id="CHEBI:59776"/>
        <dbReference type="ChEBI" id="CHEBI:597326"/>
        <dbReference type="EC" id="4.3.3.6"/>
    </reaction>
</comment>
<comment type="catalytic activity">
    <reaction evidence="1">
        <text>L-glutamine + H2O = L-glutamate + NH4(+)</text>
        <dbReference type="Rhea" id="RHEA:15889"/>
        <dbReference type="ChEBI" id="CHEBI:15377"/>
        <dbReference type="ChEBI" id="CHEBI:28938"/>
        <dbReference type="ChEBI" id="CHEBI:29985"/>
        <dbReference type="ChEBI" id="CHEBI:58359"/>
        <dbReference type="EC" id="3.5.1.2"/>
    </reaction>
</comment>
<comment type="pathway">
    <text evidence="1">Cofactor biosynthesis; pyridoxal 5'-phosphate biosynthesis.</text>
</comment>
<comment type="subunit">
    <text evidence="1">In the presence of PdxS, forms a dodecamer of heterodimers. Only shows activity in the heterodimer.</text>
</comment>
<comment type="similarity">
    <text evidence="1">Belongs to the glutaminase PdxT/SNO family.</text>
</comment>
<gene>
    <name evidence="1" type="primary">pdxT</name>
    <name type="ordered locus">cgR_0898</name>
</gene>
<sequence length="200" mass="21323">MIVGVLALQGGVEEHLTALEALGATTRKVRVPKDLDGLEGIVIPGGESTVLDKLARTFDVAEPLANLIRDGLPVFATCAGLIYLAKHLDNPARGQQTLELLDVVVRRNAFGTQRESFDTTVDVSFDGATFPGVQASFIRAPIVTAFGPTVEAIAALNGGEVVGVRQGNIIALSFHPEETGDYRIHQAWLNLIGKRTELAI</sequence>
<protein>
    <recommendedName>
        <fullName evidence="1">Pyridoxal 5'-phosphate synthase subunit PdxT</fullName>
        <ecNumber evidence="1">4.3.3.6</ecNumber>
    </recommendedName>
    <alternativeName>
        <fullName evidence="1">Pdx2</fullName>
    </alternativeName>
    <alternativeName>
        <fullName evidence="1">Pyridoxal 5'-phosphate synthase glutaminase subunit</fullName>
        <ecNumber evidence="1">3.5.1.2</ecNumber>
    </alternativeName>
</protein>
<accession>A4QCC4</accession>
<keyword id="KW-0315">Glutamine amidotransferase</keyword>
<keyword id="KW-0378">Hydrolase</keyword>
<keyword id="KW-0456">Lyase</keyword>
<keyword id="KW-0663">Pyridoxal phosphate</keyword>
<name>PDXT_CORGB</name>